<reference key="1">
    <citation type="submission" date="2007-10" db="EMBL/GenBank/DDBJ databases">
        <title>Complete sequence of chromosome of Desulforudis audaxviator MP104C.</title>
        <authorList>
            <person name="Copeland A."/>
            <person name="Lucas S."/>
            <person name="Lapidus A."/>
            <person name="Barry K."/>
            <person name="Glavina del Rio T."/>
            <person name="Dalin E."/>
            <person name="Tice H."/>
            <person name="Bruce D."/>
            <person name="Pitluck S."/>
            <person name="Lowry S.R."/>
            <person name="Larimer F."/>
            <person name="Land M.L."/>
            <person name="Hauser L."/>
            <person name="Kyrpides N."/>
            <person name="Ivanova N.N."/>
            <person name="Richardson P."/>
        </authorList>
    </citation>
    <scope>NUCLEOTIDE SEQUENCE [LARGE SCALE GENOMIC DNA]</scope>
    <source>
        <strain>MP104C</strain>
    </source>
</reference>
<feature type="chain" id="PRO_1000091181" description="D-alanine--D-alanine ligase">
    <location>
        <begin position="1"/>
        <end position="306"/>
    </location>
</feature>
<feature type="domain" description="ATP-grasp" evidence="2">
    <location>
        <begin position="101"/>
        <end position="301"/>
    </location>
</feature>
<feature type="binding site" evidence="2">
    <location>
        <begin position="129"/>
        <end position="185"/>
    </location>
    <ligand>
        <name>ATP</name>
        <dbReference type="ChEBI" id="CHEBI:30616"/>
    </ligand>
</feature>
<feature type="binding site" evidence="2">
    <location>
        <position position="256"/>
    </location>
    <ligand>
        <name>Mg(2+)</name>
        <dbReference type="ChEBI" id="CHEBI:18420"/>
        <label>1</label>
    </ligand>
</feature>
<feature type="binding site" evidence="2">
    <location>
        <position position="268"/>
    </location>
    <ligand>
        <name>Mg(2+)</name>
        <dbReference type="ChEBI" id="CHEBI:18420"/>
        <label>1</label>
    </ligand>
</feature>
<feature type="binding site" evidence="2">
    <location>
        <position position="268"/>
    </location>
    <ligand>
        <name>Mg(2+)</name>
        <dbReference type="ChEBI" id="CHEBI:18420"/>
        <label>2</label>
    </ligand>
</feature>
<feature type="binding site" evidence="2">
    <location>
        <position position="270"/>
    </location>
    <ligand>
        <name>Mg(2+)</name>
        <dbReference type="ChEBI" id="CHEBI:18420"/>
        <label>2</label>
    </ligand>
</feature>
<dbReference type="EC" id="6.3.2.4" evidence="2"/>
<dbReference type="EMBL" id="CP000860">
    <property type="protein sequence ID" value="ACA59751.1"/>
    <property type="molecule type" value="Genomic_DNA"/>
</dbReference>
<dbReference type="RefSeq" id="WP_012302337.1">
    <property type="nucleotide sequence ID" value="NC_010424.1"/>
</dbReference>
<dbReference type="SMR" id="B1I3W6"/>
<dbReference type="STRING" id="477974.Daud_1240"/>
<dbReference type="KEGG" id="dau:Daud_1240"/>
<dbReference type="eggNOG" id="COG1181">
    <property type="taxonomic scope" value="Bacteria"/>
</dbReference>
<dbReference type="HOGENOM" id="CLU_039268_2_0_9"/>
<dbReference type="OrthoDB" id="9813261at2"/>
<dbReference type="UniPathway" id="UPA00219"/>
<dbReference type="Proteomes" id="UP000008544">
    <property type="component" value="Chromosome"/>
</dbReference>
<dbReference type="GO" id="GO:0005737">
    <property type="term" value="C:cytoplasm"/>
    <property type="evidence" value="ECO:0007669"/>
    <property type="project" value="UniProtKB-SubCell"/>
</dbReference>
<dbReference type="GO" id="GO:0005524">
    <property type="term" value="F:ATP binding"/>
    <property type="evidence" value="ECO:0007669"/>
    <property type="project" value="UniProtKB-KW"/>
</dbReference>
<dbReference type="GO" id="GO:0008716">
    <property type="term" value="F:D-alanine-D-alanine ligase activity"/>
    <property type="evidence" value="ECO:0007669"/>
    <property type="project" value="UniProtKB-UniRule"/>
</dbReference>
<dbReference type="GO" id="GO:0046872">
    <property type="term" value="F:metal ion binding"/>
    <property type="evidence" value="ECO:0007669"/>
    <property type="project" value="UniProtKB-KW"/>
</dbReference>
<dbReference type="GO" id="GO:0071555">
    <property type="term" value="P:cell wall organization"/>
    <property type="evidence" value="ECO:0007669"/>
    <property type="project" value="UniProtKB-KW"/>
</dbReference>
<dbReference type="GO" id="GO:0009252">
    <property type="term" value="P:peptidoglycan biosynthetic process"/>
    <property type="evidence" value="ECO:0007669"/>
    <property type="project" value="UniProtKB-UniRule"/>
</dbReference>
<dbReference type="GO" id="GO:0008360">
    <property type="term" value="P:regulation of cell shape"/>
    <property type="evidence" value="ECO:0007669"/>
    <property type="project" value="UniProtKB-KW"/>
</dbReference>
<dbReference type="Gene3D" id="3.40.50.20">
    <property type="match status" value="1"/>
</dbReference>
<dbReference type="Gene3D" id="3.30.1490.20">
    <property type="entry name" value="ATP-grasp fold, A domain"/>
    <property type="match status" value="1"/>
</dbReference>
<dbReference type="Gene3D" id="3.30.470.20">
    <property type="entry name" value="ATP-grasp fold, B domain"/>
    <property type="match status" value="1"/>
</dbReference>
<dbReference type="HAMAP" id="MF_00047">
    <property type="entry name" value="Dala_Dala_lig"/>
    <property type="match status" value="1"/>
</dbReference>
<dbReference type="InterPro" id="IPR011761">
    <property type="entry name" value="ATP-grasp"/>
</dbReference>
<dbReference type="InterPro" id="IPR013815">
    <property type="entry name" value="ATP_grasp_subdomain_1"/>
</dbReference>
<dbReference type="InterPro" id="IPR000291">
    <property type="entry name" value="D-Ala_lig_Van_CS"/>
</dbReference>
<dbReference type="InterPro" id="IPR005905">
    <property type="entry name" value="D_ala_D_ala"/>
</dbReference>
<dbReference type="InterPro" id="IPR011095">
    <property type="entry name" value="Dala_Dala_lig_C"/>
</dbReference>
<dbReference type="InterPro" id="IPR011127">
    <property type="entry name" value="Dala_Dala_lig_N"/>
</dbReference>
<dbReference type="InterPro" id="IPR016185">
    <property type="entry name" value="PreATP-grasp_dom_sf"/>
</dbReference>
<dbReference type="NCBIfam" id="TIGR01205">
    <property type="entry name" value="D_ala_D_alaTIGR"/>
    <property type="match status" value="1"/>
</dbReference>
<dbReference type="NCBIfam" id="NF002378">
    <property type="entry name" value="PRK01372.1"/>
    <property type="match status" value="1"/>
</dbReference>
<dbReference type="PANTHER" id="PTHR23132">
    <property type="entry name" value="D-ALANINE--D-ALANINE LIGASE"/>
    <property type="match status" value="1"/>
</dbReference>
<dbReference type="PANTHER" id="PTHR23132:SF23">
    <property type="entry name" value="D-ALANINE--D-ALANINE LIGASE B"/>
    <property type="match status" value="1"/>
</dbReference>
<dbReference type="Pfam" id="PF07478">
    <property type="entry name" value="Dala_Dala_lig_C"/>
    <property type="match status" value="1"/>
</dbReference>
<dbReference type="Pfam" id="PF01820">
    <property type="entry name" value="Dala_Dala_lig_N"/>
    <property type="match status" value="2"/>
</dbReference>
<dbReference type="PIRSF" id="PIRSF039102">
    <property type="entry name" value="Ddl/VanB"/>
    <property type="match status" value="1"/>
</dbReference>
<dbReference type="SMART" id="SM01209">
    <property type="entry name" value="GARS_A"/>
    <property type="match status" value="1"/>
</dbReference>
<dbReference type="SUPFAM" id="SSF56059">
    <property type="entry name" value="Glutathione synthetase ATP-binding domain-like"/>
    <property type="match status" value="1"/>
</dbReference>
<dbReference type="SUPFAM" id="SSF52440">
    <property type="entry name" value="PreATP-grasp domain"/>
    <property type="match status" value="1"/>
</dbReference>
<dbReference type="PROSITE" id="PS50975">
    <property type="entry name" value="ATP_GRASP"/>
    <property type="match status" value="1"/>
</dbReference>
<dbReference type="PROSITE" id="PS00843">
    <property type="entry name" value="DALA_DALA_LIGASE_1"/>
    <property type="match status" value="1"/>
</dbReference>
<dbReference type="PROSITE" id="PS00844">
    <property type="entry name" value="DALA_DALA_LIGASE_2"/>
    <property type="match status" value="1"/>
</dbReference>
<keyword id="KW-0067">ATP-binding</keyword>
<keyword id="KW-0133">Cell shape</keyword>
<keyword id="KW-0961">Cell wall biogenesis/degradation</keyword>
<keyword id="KW-0963">Cytoplasm</keyword>
<keyword id="KW-0436">Ligase</keyword>
<keyword id="KW-0460">Magnesium</keyword>
<keyword id="KW-0464">Manganese</keyword>
<keyword id="KW-0479">Metal-binding</keyword>
<keyword id="KW-0547">Nucleotide-binding</keyword>
<keyword id="KW-0573">Peptidoglycan synthesis</keyword>
<keyword id="KW-1185">Reference proteome</keyword>
<protein>
    <recommendedName>
        <fullName evidence="2">D-alanine--D-alanine ligase</fullName>
        <ecNumber evidence="2">6.3.2.4</ecNumber>
    </recommendedName>
    <alternativeName>
        <fullName evidence="2">D-Ala-D-Ala ligase</fullName>
    </alternativeName>
    <alternativeName>
        <fullName evidence="2">D-alanylalanine synthetase</fullName>
    </alternativeName>
</protein>
<sequence>MVRRIGVLMGGLSAEREVSLRSGRAVCAALESRGYEVVPIDVNRDVARTVRETGIELAFIALHGPLGEDGAVQGLLEVLGIPYTGSGVLASALAMDKIATKKILAHAGLPVPEYRELEAGDADSARAVVAELGLPVVVKAPTQGSSIGVYIVEREEDLEARITDAVAYGGTRVLVEKFIAGPELTAAVLGNREPRVLPLIEIVSATGKYDYESKYTPGLSDHLIPPRVPREVQERVSDLALRAYRALGCRGFARVDLIVSGNEAFILEINTIPGLTDVSLFPDAARAAGMSFPDLVEHLVRLAQER</sequence>
<accession>B1I3W6</accession>
<evidence type="ECO:0000250" key="1"/>
<evidence type="ECO:0000255" key="2">
    <source>
        <dbReference type="HAMAP-Rule" id="MF_00047"/>
    </source>
</evidence>
<gene>
    <name evidence="2" type="primary">ddl</name>
    <name type="ordered locus">Daud_1240</name>
</gene>
<name>DDL_DESAP</name>
<organism>
    <name type="scientific">Desulforudis audaxviator (strain MP104C)</name>
    <dbReference type="NCBI Taxonomy" id="477974"/>
    <lineage>
        <taxon>Bacteria</taxon>
        <taxon>Bacillati</taxon>
        <taxon>Bacillota</taxon>
        <taxon>Clostridia</taxon>
        <taxon>Thermoanaerobacterales</taxon>
        <taxon>Candidatus Desulforudaceae</taxon>
        <taxon>Candidatus Desulforudis</taxon>
    </lineage>
</organism>
<comment type="function">
    <text evidence="2">Cell wall formation.</text>
</comment>
<comment type="catalytic activity">
    <reaction evidence="2">
        <text>2 D-alanine + ATP = D-alanyl-D-alanine + ADP + phosphate + H(+)</text>
        <dbReference type="Rhea" id="RHEA:11224"/>
        <dbReference type="ChEBI" id="CHEBI:15378"/>
        <dbReference type="ChEBI" id="CHEBI:30616"/>
        <dbReference type="ChEBI" id="CHEBI:43474"/>
        <dbReference type="ChEBI" id="CHEBI:57416"/>
        <dbReference type="ChEBI" id="CHEBI:57822"/>
        <dbReference type="ChEBI" id="CHEBI:456216"/>
        <dbReference type="EC" id="6.3.2.4"/>
    </reaction>
</comment>
<comment type="cofactor">
    <cofactor evidence="1">
        <name>Mg(2+)</name>
        <dbReference type="ChEBI" id="CHEBI:18420"/>
    </cofactor>
    <cofactor evidence="1">
        <name>Mn(2+)</name>
        <dbReference type="ChEBI" id="CHEBI:29035"/>
    </cofactor>
    <text evidence="1">Binds 2 magnesium or manganese ions per subunit.</text>
</comment>
<comment type="pathway">
    <text evidence="2">Cell wall biogenesis; peptidoglycan biosynthesis.</text>
</comment>
<comment type="subcellular location">
    <subcellularLocation>
        <location evidence="2">Cytoplasm</location>
    </subcellularLocation>
</comment>
<comment type="similarity">
    <text evidence="2">Belongs to the D-alanine--D-alanine ligase family.</text>
</comment>
<proteinExistence type="inferred from homology"/>